<keyword id="KW-0963">Cytoplasm</keyword>
<keyword id="KW-0507">mRNA processing</keyword>
<keyword id="KW-0508">mRNA splicing</keyword>
<keyword id="KW-0509">mRNA transport</keyword>
<keyword id="KW-0539">Nucleus</keyword>
<keyword id="KW-1185">Reference proteome</keyword>
<keyword id="KW-0677">Repeat</keyword>
<keyword id="KW-0687">Ribonucleoprotein</keyword>
<keyword id="KW-0694">RNA-binding</keyword>
<keyword id="KW-0747">Spliceosome</keyword>
<keyword id="KW-0813">Transport</keyword>
<evidence type="ECO:0000250" key="1"/>
<evidence type="ECO:0000255" key="2">
    <source>
        <dbReference type="PROSITE-ProRule" id="PRU00176"/>
    </source>
</evidence>
<evidence type="ECO:0000256" key="3">
    <source>
        <dbReference type="SAM" id="MobiDB-lite"/>
    </source>
</evidence>
<evidence type="ECO:0000269" key="4">
    <source>
    </source>
</evidence>
<evidence type="ECO:0000305" key="5"/>
<reference key="1">
    <citation type="journal article" date="2003" name="Plant Mol. Biol.">
        <title>Arabidopsis transportin1 is the nuclear import receptor for the circadian clock-regulated RNA-binding protein AtGRP7.</title>
        <authorList>
            <person name="Ziemienowicz A."/>
            <person name="Haasen D."/>
            <person name="Staiger D."/>
            <person name="Merkle T."/>
        </authorList>
    </citation>
    <scope>NUCLEOTIDE SEQUENCE [MRNA]</scope>
    <scope>INTERACTION WITH TRN1</scope>
    <scope>NUCLEAR LOCALIZATION SIGNAL</scope>
    <scope>SUBCELLULAR LOCATION</scope>
    <source>
        <strain>cv. Columbia</strain>
    </source>
</reference>
<reference key="2">
    <citation type="journal article" date="1998" name="Nature">
        <title>Analysis of 1.9 Mb of contiguous sequence from chromosome 4 of Arabidopsis thaliana.</title>
        <authorList>
            <person name="Bevan M."/>
            <person name="Bancroft I."/>
            <person name="Bent E."/>
            <person name="Love K."/>
            <person name="Goodman H.M."/>
            <person name="Dean C."/>
            <person name="Bergkamp R."/>
            <person name="Dirkse W."/>
            <person name="van Staveren M."/>
            <person name="Stiekema W."/>
            <person name="Drost L."/>
            <person name="Ridley P."/>
            <person name="Hudson S.-A."/>
            <person name="Patel K."/>
            <person name="Murphy G."/>
            <person name="Piffanelli P."/>
            <person name="Wedler H."/>
            <person name="Wedler E."/>
            <person name="Wambutt R."/>
            <person name="Weitzenegger T."/>
            <person name="Pohl T."/>
            <person name="Terryn N."/>
            <person name="Gielen J."/>
            <person name="Villarroel R."/>
            <person name="De Clercq R."/>
            <person name="van Montagu M."/>
            <person name="Lecharny A."/>
            <person name="Aubourg S."/>
            <person name="Gy I."/>
            <person name="Kreis M."/>
            <person name="Lao N."/>
            <person name="Kavanagh T."/>
            <person name="Hempel S."/>
            <person name="Kotter P."/>
            <person name="Entian K.-D."/>
            <person name="Rieger M."/>
            <person name="Schaefer M."/>
            <person name="Funk B."/>
            <person name="Mueller-Auer S."/>
            <person name="Silvey M."/>
            <person name="James R."/>
            <person name="Monfort A."/>
            <person name="Pons A."/>
            <person name="Puigdomenech P."/>
            <person name="Douka A."/>
            <person name="Voukelatou E."/>
            <person name="Milioni D."/>
            <person name="Hatzopoulos P."/>
            <person name="Piravandi E."/>
            <person name="Obermaier B."/>
            <person name="Hilbert H."/>
            <person name="Duesterhoeft A."/>
            <person name="Moores T."/>
            <person name="Jones J.D.G."/>
            <person name="Eneva T."/>
            <person name="Palme K."/>
            <person name="Benes V."/>
            <person name="Rechmann S."/>
            <person name="Ansorge W."/>
            <person name="Cooke R."/>
            <person name="Berger C."/>
            <person name="Delseny M."/>
            <person name="Voet M."/>
            <person name="Volckaert G."/>
            <person name="Mewes H.-W."/>
            <person name="Klosterman S."/>
            <person name="Schueller C."/>
            <person name="Chalwatzis N."/>
        </authorList>
    </citation>
    <scope>NUCLEOTIDE SEQUENCE [LARGE SCALE GENOMIC DNA]</scope>
    <source>
        <strain>cv. Columbia</strain>
    </source>
</reference>
<reference key="3">
    <citation type="journal article" date="1999" name="Nature">
        <title>Sequence and analysis of chromosome 4 of the plant Arabidopsis thaliana.</title>
        <authorList>
            <person name="Mayer K.F.X."/>
            <person name="Schueller C."/>
            <person name="Wambutt R."/>
            <person name="Murphy G."/>
            <person name="Volckaert G."/>
            <person name="Pohl T."/>
            <person name="Duesterhoeft A."/>
            <person name="Stiekema W."/>
            <person name="Entian K.-D."/>
            <person name="Terryn N."/>
            <person name="Harris B."/>
            <person name="Ansorge W."/>
            <person name="Brandt P."/>
            <person name="Grivell L.A."/>
            <person name="Rieger M."/>
            <person name="Weichselgartner M."/>
            <person name="de Simone V."/>
            <person name="Obermaier B."/>
            <person name="Mache R."/>
            <person name="Mueller M."/>
            <person name="Kreis M."/>
            <person name="Delseny M."/>
            <person name="Puigdomenech P."/>
            <person name="Watson M."/>
            <person name="Schmidtheini T."/>
            <person name="Reichert B."/>
            <person name="Portetelle D."/>
            <person name="Perez-Alonso M."/>
            <person name="Boutry M."/>
            <person name="Bancroft I."/>
            <person name="Vos P."/>
            <person name="Hoheisel J."/>
            <person name="Zimmermann W."/>
            <person name="Wedler H."/>
            <person name="Ridley P."/>
            <person name="Langham S.-A."/>
            <person name="McCullagh B."/>
            <person name="Bilham L."/>
            <person name="Robben J."/>
            <person name="van der Schueren J."/>
            <person name="Grymonprez B."/>
            <person name="Chuang Y.-J."/>
            <person name="Vandenbussche F."/>
            <person name="Braeken M."/>
            <person name="Weltjens I."/>
            <person name="Voet M."/>
            <person name="Bastiaens I."/>
            <person name="Aert R."/>
            <person name="Defoor E."/>
            <person name="Weitzenegger T."/>
            <person name="Bothe G."/>
            <person name="Ramsperger U."/>
            <person name="Hilbert H."/>
            <person name="Braun M."/>
            <person name="Holzer E."/>
            <person name="Brandt A."/>
            <person name="Peters S."/>
            <person name="van Staveren M."/>
            <person name="Dirkse W."/>
            <person name="Mooijman P."/>
            <person name="Klein Lankhorst R."/>
            <person name="Rose M."/>
            <person name="Hauf J."/>
            <person name="Koetter P."/>
            <person name="Berneiser S."/>
            <person name="Hempel S."/>
            <person name="Feldpausch M."/>
            <person name="Lamberth S."/>
            <person name="Van den Daele H."/>
            <person name="De Keyser A."/>
            <person name="Buysshaert C."/>
            <person name="Gielen J."/>
            <person name="Villarroel R."/>
            <person name="De Clercq R."/>
            <person name="van Montagu M."/>
            <person name="Rogers J."/>
            <person name="Cronin A."/>
            <person name="Quail M.A."/>
            <person name="Bray-Allen S."/>
            <person name="Clark L."/>
            <person name="Doggett J."/>
            <person name="Hall S."/>
            <person name="Kay M."/>
            <person name="Lennard N."/>
            <person name="McLay K."/>
            <person name="Mayes R."/>
            <person name="Pettett A."/>
            <person name="Rajandream M.A."/>
            <person name="Lyne M."/>
            <person name="Benes V."/>
            <person name="Rechmann S."/>
            <person name="Borkova D."/>
            <person name="Bloecker H."/>
            <person name="Scharfe M."/>
            <person name="Grimm M."/>
            <person name="Loehnert T.-H."/>
            <person name="Dose S."/>
            <person name="de Haan M."/>
            <person name="Maarse A.C."/>
            <person name="Schaefer M."/>
            <person name="Mueller-Auer S."/>
            <person name="Gabel C."/>
            <person name="Fuchs M."/>
            <person name="Fartmann B."/>
            <person name="Granderath K."/>
            <person name="Dauner D."/>
            <person name="Herzl A."/>
            <person name="Neumann S."/>
            <person name="Argiriou A."/>
            <person name="Vitale D."/>
            <person name="Liguori R."/>
            <person name="Piravandi E."/>
            <person name="Massenet O."/>
            <person name="Quigley F."/>
            <person name="Clabauld G."/>
            <person name="Muendlein A."/>
            <person name="Felber R."/>
            <person name="Schnabl S."/>
            <person name="Hiller R."/>
            <person name="Schmidt W."/>
            <person name="Lecharny A."/>
            <person name="Aubourg S."/>
            <person name="Chefdor F."/>
            <person name="Cooke R."/>
            <person name="Berger C."/>
            <person name="Monfort A."/>
            <person name="Casacuberta E."/>
            <person name="Gibbons T."/>
            <person name="Weber N."/>
            <person name="Vandenbol M."/>
            <person name="Bargues M."/>
            <person name="Terol J."/>
            <person name="Torres A."/>
            <person name="Perez-Perez A."/>
            <person name="Purnelle B."/>
            <person name="Bent E."/>
            <person name="Johnson S."/>
            <person name="Tacon D."/>
            <person name="Jesse T."/>
            <person name="Heijnen L."/>
            <person name="Schwarz S."/>
            <person name="Scholler P."/>
            <person name="Heber S."/>
            <person name="Francs P."/>
            <person name="Bielke C."/>
            <person name="Frishman D."/>
            <person name="Haase D."/>
            <person name="Lemcke K."/>
            <person name="Mewes H.-W."/>
            <person name="Stocker S."/>
            <person name="Zaccaria P."/>
            <person name="Bevan M."/>
            <person name="Wilson R.K."/>
            <person name="de la Bastide M."/>
            <person name="Habermann K."/>
            <person name="Parnell L."/>
            <person name="Dedhia N."/>
            <person name="Gnoj L."/>
            <person name="Schutz K."/>
            <person name="Huang E."/>
            <person name="Spiegel L."/>
            <person name="Sekhon M."/>
            <person name="Murray J."/>
            <person name="Sheet P."/>
            <person name="Cordes M."/>
            <person name="Abu-Threideh J."/>
            <person name="Stoneking T."/>
            <person name="Kalicki J."/>
            <person name="Graves T."/>
            <person name="Harmon G."/>
            <person name="Edwards J."/>
            <person name="Latreille P."/>
            <person name="Courtney L."/>
            <person name="Cloud J."/>
            <person name="Abbott A."/>
            <person name="Scott K."/>
            <person name="Johnson D."/>
            <person name="Minx P."/>
            <person name="Bentley D."/>
            <person name="Fulton B."/>
            <person name="Miller N."/>
            <person name="Greco T."/>
            <person name="Kemp K."/>
            <person name="Kramer J."/>
            <person name="Fulton L."/>
            <person name="Mardis E."/>
            <person name="Dante M."/>
            <person name="Pepin K."/>
            <person name="Hillier L.W."/>
            <person name="Nelson J."/>
            <person name="Spieth J."/>
            <person name="Ryan E."/>
            <person name="Andrews S."/>
            <person name="Geisel C."/>
            <person name="Layman D."/>
            <person name="Du H."/>
            <person name="Ali J."/>
            <person name="Berghoff A."/>
            <person name="Jones K."/>
            <person name="Drone K."/>
            <person name="Cotton M."/>
            <person name="Joshu C."/>
            <person name="Antonoiu B."/>
            <person name="Zidanic M."/>
            <person name="Strong C."/>
            <person name="Sun H."/>
            <person name="Lamar B."/>
            <person name="Yordan C."/>
            <person name="Ma P."/>
            <person name="Zhong J."/>
            <person name="Preston R."/>
            <person name="Vil D."/>
            <person name="Shekher M."/>
            <person name="Matero A."/>
            <person name="Shah R."/>
            <person name="Swaby I.K."/>
            <person name="O'Shaughnessy A."/>
            <person name="Rodriguez M."/>
            <person name="Hoffman J."/>
            <person name="Till S."/>
            <person name="Granat S."/>
            <person name="Shohdy N."/>
            <person name="Hasegawa A."/>
            <person name="Hameed A."/>
            <person name="Lodhi M."/>
            <person name="Johnson A."/>
            <person name="Chen E."/>
            <person name="Marra M.A."/>
            <person name="Martienssen R."/>
            <person name="McCombie W.R."/>
        </authorList>
    </citation>
    <scope>NUCLEOTIDE SEQUENCE [LARGE SCALE GENOMIC DNA]</scope>
    <source>
        <strain>cv. Columbia</strain>
    </source>
</reference>
<reference key="4">
    <citation type="journal article" date="2017" name="Plant J.">
        <title>Araport11: a complete reannotation of the Arabidopsis thaliana reference genome.</title>
        <authorList>
            <person name="Cheng C.Y."/>
            <person name="Krishnakumar V."/>
            <person name="Chan A.P."/>
            <person name="Thibaud-Nissen F."/>
            <person name="Schobel S."/>
            <person name="Town C.D."/>
        </authorList>
    </citation>
    <scope>GENOME REANNOTATION</scope>
    <source>
        <strain>cv. Columbia</strain>
    </source>
</reference>
<reference key="5">
    <citation type="submission" date="2006-07" db="EMBL/GenBank/DDBJ databases">
        <title>Large-scale analysis of RIKEN Arabidopsis full-length (RAFL) cDNAs.</title>
        <authorList>
            <person name="Totoki Y."/>
            <person name="Seki M."/>
            <person name="Ishida J."/>
            <person name="Nakajima M."/>
            <person name="Enju A."/>
            <person name="Kamiya A."/>
            <person name="Narusaka M."/>
            <person name="Shin-i T."/>
            <person name="Nakagawa M."/>
            <person name="Sakamoto N."/>
            <person name="Oishi K."/>
            <person name="Kohara Y."/>
            <person name="Kobayashi M."/>
            <person name="Toyoda A."/>
            <person name="Sakaki Y."/>
            <person name="Sakurai T."/>
            <person name="Iida K."/>
            <person name="Akiyama K."/>
            <person name="Satou M."/>
            <person name="Toyoda T."/>
            <person name="Konagaya A."/>
            <person name="Carninci P."/>
            <person name="Kawai J."/>
            <person name="Hayashizaki Y."/>
            <person name="Shinozaki K."/>
        </authorList>
    </citation>
    <scope>NUCLEOTIDE SEQUENCE [LARGE SCALE MRNA]</scope>
    <source>
        <strain>cv. Columbia</strain>
    </source>
</reference>
<reference key="6">
    <citation type="journal article" date="2000" name="Trends Plant Sci.">
        <title>Pre-mRNA splicing in higher plants.</title>
        <authorList>
            <person name="Lorkovic Z.J."/>
            <person name="Wieczorek Kirk D.A."/>
            <person name="Lambermon M.H."/>
            <person name="Filipowicz W."/>
        </authorList>
    </citation>
    <scope>REVIEW</scope>
    <scope>GENE FAMILY</scope>
</reference>
<reference key="7">
    <citation type="journal article" date="2002" name="Nucleic Acids Res.">
        <title>Genome analysis: RNA recognition motif (RRM) and K homology (KH) domain RNA-binding proteins from the flowering plant Arabidopsis thaliana.</title>
        <authorList>
            <person name="Lorkovic Z.J."/>
            <person name="Barta A."/>
        </authorList>
    </citation>
    <scope>GENE FAMILY</scope>
</reference>
<accession>Q8W034</accession>
<accession>O23288</accession>
<name>RNP1_ARATH</name>
<organism>
    <name type="scientific">Arabidopsis thaliana</name>
    <name type="common">Mouse-ear cress</name>
    <dbReference type="NCBI Taxonomy" id="3702"/>
    <lineage>
        <taxon>Eukaryota</taxon>
        <taxon>Viridiplantae</taxon>
        <taxon>Streptophyta</taxon>
        <taxon>Embryophyta</taxon>
        <taxon>Tracheophyta</taxon>
        <taxon>Spermatophyta</taxon>
        <taxon>Magnoliopsida</taxon>
        <taxon>eudicotyledons</taxon>
        <taxon>Gunneridae</taxon>
        <taxon>Pentapetalae</taxon>
        <taxon>rosids</taxon>
        <taxon>malvids</taxon>
        <taxon>Brassicales</taxon>
        <taxon>Brassicaceae</taxon>
        <taxon>Camelineae</taxon>
        <taxon>Arabidopsis</taxon>
    </lineage>
</organism>
<dbReference type="EMBL" id="AJ303457">
    <property type="protein sequence ID" value="CAC83517.1"/>
    <property type="molecule type" value="mRNA"/>
</dbReference>
<dbReference type="EMBL" id="Z97335">
    <property type="protein sequence ID" value="CAB10209.1"/>
    <property type="status" value="ALT_SEQ"/>
    <property type="molecule type" value="Genomic_DNA"/>
</dbReference>
<dbReference type="EMBL" id="AL161538">
    <property type="protein sequence ID" value="CAB78472.1"/>
    <property type="status" value="ALT_SEQ"/>
    <property type="molecule type" value="Genomic_DNA"/>
</dbReference>
<dbReference type="EMBL" id="CP002687">
    <property type="protein sequence ID" value="AEE83411.1"/>
    <property type="molecule type" value="Genomic_DNA"/>
</dbReference>
<dbReference type="EMBL" id="CP002687">
    <property type="protein sequence ID" value="ANM66890.1"/>
    <property type="molecule type" value="Genomic_DNA"/>
</dbReference>
<dbReference type="EMBL" id="AK226323">
    <property type="protein sequence ID" value="BAE98475.1"/>
    <property type="molecule type" value="mRNA"/>
</dbReference>
<dbReference type="PIR" id="G71404">
    <property type="entry name" value="G71404"/>
</dbReference>
<dbReference type="RefSeq" id="NP_001328758.1">
    <property type="nucleotide sequence ID" value="NM_001340917.1"/>
</dbReference>
<dbReference type="RefSeq" id="NP_193166.2">
    <property type="nucleotide sequence ID" value="NM_117507.5"/>
</dbReference>
<dbReference type="SMR" id="Q8W034"/>
<dbReference type="BioGRID" id="12368">
    <property type="interactions" value="3"/>
</dbReference>
<dbReference type="FunCoup" id="Q8W034">
    <property type="interactions" value="1198"/>
</dbReference>
<dbReference type="IntAct" id="Q8W034">
    <property type="interactions" value="2"/>
</dbReference>
<dbReference type="STRING" id="3702.Q8W034"/>
<dbReference type="GlyGen" id="Q8W034">
    <property type="glycosylation" value="1 site, 1 O-linked glycan (1 site)"/>
</dbReference>
<dbReference type="iPTMnet" id="Q8W034"/>
<dbReference type="PaxDb" id="3702-AT4G14300.1"/>
<dbReference type="ProteomicsDB" id="227952"/>
<dbReference type="EnsemblPlants" id="AT4G14300.1">
    <property type="protein sequence ID" value="AT4G14300.1"/>
    <property type="gene ID" value="AT4G14300"/>
</dbReference>
<dbReference type="EnsemblPlants" id="AT4G14300.2">
    <property type="protein sequence ID" value="AT4G14300.2"/>
    <property type="gene ID" value="AT4G14300"/>
</dbReference>
<dbReference type="GeneID" id="827071"/>
<dbReference type="Gramene" id="AT4G14300.1">
    <property type="protein sequence ID" value="AT4G14300.1"/>
    <property type="gene ID" value="AT4G14300"/>
</dbReference>
<dbReference type="Gramene" id="AT4G14300.2">
    <property type="protein sequence ID" value="AT4G14300.2"/>
    <property type="gene ID" value="AT4G14300"/>
</dbReference>
<dbReference type="KEGG" id="ath:AT4G14300"/>
<dbReference type="Araport" id="AT4G14300"/>
<dbReference type="TAIR" id="AT4G14300">
    <property type="gene designation" value="RBGD4"/>
</dbReference>
<dbReference type="eggNOG" id="KOG4205">
    <property type="taxonomic scope" value="Eukaryota"/>
</dbReference>
<dbReference type="HOGENOM" id="CLU_012062_1_2_1"/>
<dbReference type="InParanoid" id="Q8W034"/>
<dbReference type="OMA" id="PRNSWDT"/>
<dbReference type="OrthoDB" id="1109990at2759"/>
<dbReference type="PhylomeDB" id="Q8W034"/>
<dbReference type="CD-CODE" id="4299E36E">
    <property type="entry name" value="Nucleolus"/>
</dbReference>
<dbReference type="PRO" id="PR:Q8W034"/>
<dbReference type="Proteomes" id="UP000006548">
    <property type="component" value="Chromosome 4"/>
</dbReference>
<dbReference type="ExpressionAtlas" id="Q8W034">
    <property type="expression patterns" value="baseline and differential"/>
</dbReference>
<dbReference type="GO" id="GO:0005829">
    <property type="term" value="C:cytosol"/>
    <property type="evidence" value="ECO:0000314"/>
    <property type="project" value="TAIR"/>
</dbReference>
<dbReference type="GO" id="GO:0005634">
    <property type="term" value="C:nucleus"/>
    <property type="evidence" value="ECO:0000314"/>
    <property type="project" value="TAIR"/>
</dbReference>
<dbReference type="GO" id="GO:0005681">
    <property type="term" value="C:spliceosomal complex"/>
    <property type="evidence" value="ECO:0007669"/>
    <property type="project" value="UniProtKB-KW"/>
</dbReference>
<dbReference type="GO" id="GO:0003729">
    <property type="term" value="F:mRNA binding"/>
    <property type="evidence" value="ECO:0000314"/>
    <property type="project" value="TAIR"/>
</dbReference>
<dbReference type="GO" id="GO:0006397">
    <property type="term" value="P:mRNA processing"/>
    <property type="evidence" value="ECO:0007669"/>
    <property type="project" value="UniProtKB-KW"/>
</dbReference>
<dbReference type="GO" id="GO:0051028">
    <property type="term" value="P:mRNA transport"/>
    <property type="evidence" value="ECO:0007669"/>
    <property type="project" value="UniProtKB-KW"/>
</dbReference>
<dbReference type="GO" id="GO:1901000">
    <property type="term" value="P:regulation of response to salt stress"/>
    <property type="evidence" value="ECO:0000315"/>
    <property type="project" value="TAIR"/>
</dbReference>
<dbReference type="GO" id="GO:2000070">
    <property type="term" value="P:regulation of response to water deprivation"/>
    <property type="evidence" value="ECO:0000315"/>
    <property type="project" value="TAIR"/>
</dbReference>
<dbReference type="GO" id="GO:0008380">
    <property type="term" value="P:RNA splicing"/>
    <property type="evidence" value="ECO:0007669"/>
    <property type="project" value="UniProtKB-KW"/>
</dbReference>
<dbReference type="GO" id="GO:0010228">
    <property type="term" value="P:vegetative to reproductive phase transition of meristem"/>
    <property type="evidence" value="ECO:0000315"/>
    <property type="project" value="TAIR"/>
</dbReference>
<dbReference type="CDD" id="cd12325">
    <property type="entry name" value="RRM1_hnRNPA_hnRNPD_like"/>
    <property type="match status" value="1"/>
</dbReference>
<dbReference type="CDD" id="cd12330">
    <property type="entry name" value="RRM2_Hrp1p"/>
    <property type="match status" value="1"/>
</dbReference>
<dbReference type="FunFam" id="3.30.70.330:FF:000051">
    <property type="entry name" value="Heterogeneous nuclear ribonucleoprotein 1"/>
    <property type="match status" value="1"/>
</dbReference>
<dbReference type="FunFam" id="3.30.70.330:FF:000478">
    <property type="entry name" value="heterogeneous nuclear ribonucleoprotein 1"/>
    <property type="match status" value="1"/>
</dbReference>
<dbReference type="Gene3D" id="3.30.70.330">
    <property type="match status" value="2"/>
</dbReference>
<dbReference type="InterPro" id="IPR053260">
    <property type="entry name" value="hnRNP"/>
</dbReference>
<dbReference type="InterPro" id="IPR012677">
    <property type="entry name" value="Nucleotide-bd_a/b_plait_sf"/>
</dbReference>
<dbReference type="InterPro" id="IPR035979">
    <property type="entry name" value="RBD_domain_sf"/>
</dbReference>
<dbReference type="InterPro" id="IPR000504">
    <property type="entry name" value="RRM_dom"/>
</dbReference>
<dbReference type="PANTHER" id="PTHR48035">
    <property type="entry name" value="HETEROGENEOUS NUCLEAR RIBONUCLEOPROTEIN 1"/>
    <property type="match status" value="1"/>
</dbReference>
<dbReference type="PANTHER" id="PTHR48035:SF2">
    <property type="entry name" value="RNA-BINDING REGION RNP-1 DOMAIN-CONTAINING PROTEIN"/>
    <property type="match status" value="1"/>
</dbReference>
<dbReference type="Pfam" id="PF00076">
    <property type="entry name" value="RRM_1"/>
    <property type="match status" value="2"/>
</dbReference>
<dbReference type="SMART" id="SM00360">
    <property type="entry name" value="RRM"/>
    <property type="match status" value="2"/>
</dbReference>
<dbReference type="SUPFAM" id="SSF54928">
    <property type="entry name" value="RNA-binding domain, RBD"/>
    <property type="match status" value="2"/>
</dbReference>
<dbReference type="PROSITE" id="PS50102">
    <property type="entry name" value="RRM"/>
    <property type="match status" value="2"/>
</dbReference>
<gene>
    <name type="primary">RNP1</name>
    <name type="ordered locus">At4g14300</name>
    <name type="ORF">dl3190w</name>
    <name type="ORF">FCAALL.156</name>
</gene>
<feature type="chain" id="PRO_0000421803" description="Heterogeneous nuclear ribonucleoprotein 1">
    <location>
        <begin position="1"/>
        <end position="411"/>
    </location>
</feature>
<feature type="domain" description="RRM 1" evidence="2">
    <location>
        <begin position="6"/>
        <end position="82"/>
    </location>
</feature>
<feature type="domain" description="RRM 2" evidence="2">
    <location>
        <begin position="110"/>
        <end position="187"/>
    </location>
</feature>
<feature type="region of interest" description="Disordered" evidence="3">
    <location>
        <begin position="81"/>
        <end position="103"/>
    </location>
</feature>
<feature type="region of interest" description="Disordered" evidence="3">
    <location>
        <begin position="183"/>
        <end position="221"/>
    </location>
</feature>
<feature type="region of interest" description="Nuclear targeting sequence (M9)">
    <location>
        <begin position="341"/>
        <end position="390"/>
    </location>
</feature>
<feature type="region of interest" description="Disordered" evidence="3">
    <location>
        <begin position="358"/>
        <end position="411"/>
    </location>
</feature>
<feature type="compositionally biased region" description="Polar residues" evidence="3">
    <location>
        <begin position="87"/>
        <end position="101"/>
    </location>
</feature>
<feature type="compositionally biased region" description="Gly residues" evidence="3">
    <location>
        <begin position="192"/>
        <end position="212"/>
    </location>
</feature>
<feature type="compositionally biased region" description="Gly residues" evidence="3">
    <location>
        <begin position="362"/>
        <end position="387"/>
    </location>
</feature>
<feature type="compositionally biased region" description="Gly residues" evidence="3">
    <location>
        <begin position="397"/>
        <end position="411"/>
    </location>
</feature>
<sequence length="411" mass="42353">MDSDQGKLFVGGISWETDEDKLREHFTNYGEVSQAIVMRDKLTGRPRGFGFVIFSDPSVLDRVLQEKHSIDTREVDVKRAMSREEQQVSGRTGNLNTSRSSGGDAYNKTKKIFVGGLPPTLTDEEFRQYFEVYGPVTDVAIMYDQATNRPRGFGFVSFDSEDAVDSVLHKTFHDLSGKQVEVKRALPKDANPGGGGRSMGGGGSGGYQGYGGNESSYDGRMDSNRFLQHQSVGNGLPSYGSSGYGAGYGNGSNGAGYGAYGGYTGSAGGYGAGATAGYGATNIPGAGYGSSTGVAPRNSWDTPASSGYGNPGYGSGAAHSGYGVPGAAPPTQSPSGYSNQGYGYGGYSGSDSGYGNQAAYGVVGGRPSGGGSNNPGSGGYMGGGYGDGSWRSDPSQGYGGGYNDGQGRQGQ</sequence>
<comment type="function">
    <text evidence="1">Involved with pre-mRNA processing. Forms complexes (ribonucleosomes) with at least 20 other different hnRNP and heterogeneous nuclear RNA in the nucleus (By similarity).</text>
</comment>
<comment type="function">
    <text evidence="1">Involved in the packaging of pre-mRNA into hnRNP particles, transport of poly(A) mRNA from the nucleus to the cytoplasm and may modulate splice site selection.</text>
</comment>
<comment type="subunit">
    <text evidence="1 4">Component of the spliceosome (By similarity). Interacts with TRN1.</text>
</comment>
<comment type="subcellular location">
    <subcellularLocation>
        <location evidence="4">Nucleus</location>
    </subcellularLocation>
    <subcellularLocation>
        <location evidence="4">Cytoplasm</location>
    </subcellularLocation>
    <text evidence="1">Localized in cytoplasmic mRNP granules containing untranslated mRNAs. Shuttles continuously between the nucleus and the cytoplasm along with mRNA. Component of ribonucleosomes. Relocalization from the cytoplasm into the nucleus is mediated by TRN1 (By similarity).</text>
</comment>
<comment type="sequence caution" evidence="5">
    <conflict type="erroneous gene model prediction">
        <sequence resource="EMBL-CDS" id="CAB10209"/>
    </conflict>
</comment>
<comment type="sequence caution" evidence="5">
    <conflict type="erroneous gene model prediction">
        <sequence resource="EMBL-CDS" id="CAB78472"/>
    </conflict>
</comment>
<proteinExistence type="evidence at protein level"/>
<protein>
    <recommendedName>
        <fullName>Heterogeneous nuclear ribonucleoprotein 1</fullName>
        <shortName>hnRNP1</shortName>
    </recommendedName>
</protein>